<keyword id="KW-0046">Antibiotic resistance</keyword>
<keyword id="KW-1003">Cell membrane</keyword>
<keyword id="KW-0133">Cell shape</keyword>
<keyword id="KW-0961">Cell wall biogenesis/degradation</keyword>
<keyword id="KW-0378">Hydrolase</keyword>
<keyword id="KW-0472">Membrane</keyword>
<keyword id="KW-0573">Peptidoglycan synthesis</keyword>
<keyword id="KW-0812">Transmembrane</keyword>
<keyword id="KW-1133">Transmembrane helix</keyword>
<gene>
    <name evidence="1" type="primary">uppP1</name>
    <name type="synonym">bacA</name>
    <name type="ordered locus">BT9727_0251</name>
</gene>
<feature type="chain" id="PRO_0000151101" description="Undecaprenyl-diphosphatase 1">
    <location>
        <begin position="1"/>
        <end position="265"/>
    </location>
</feature>
<feature type="transmembrane region" description="Helical" evidence="1">
    <location>
        <begin position="4"/>
        <end position="24"/>
    </location>
</feature>
<feature type="transmembrane region" description="Helical" evidence="1">
    <location>
        <begin position="42"/>
        <end position="62"/>
    </location>
</feature>
<feature type="transmembrane region" description="Helical" evidence="1">
    <location>
        <begin position="84"/>
        <end position="104"/>
    </location>
</feature>
<feature type="transmembrane region" description="Helical" evidence="1">
    <location>
        <begin position="108"/>
        <end position="128"/>
    </location>
</feature>
<feature type="transmembrane region" description="Helical" evidence="1">
    <location>
        <begin position="184"/>
        <end position="204"/>
    </location>
</feature>
<feature type="transmembrane region" description="Helical" evidence="1">
    <location>
        <begin position="217"/>
        <end position="237"/>
    </location>
</feature>
<feature type="transmembrane region" description="Helical" evidence="1">
    <location>
        <begin position="245"/>
        <end position="265"/>
    </location>
</feature>
<sequence length="265" mass="29046">MSDIITAFILGIVEGLAEFLPISSTGHLILVGHLLGFEGERAKTFEIVIQLGAILAIAILYHKRLVSLCNIKPLLRKEKKFNAFHVFLGVFPAVVAGLLLHDIIKTYLFQPYTVVIGLVAGAILMIFAEVKKQEATSYSLDDLTYRQALTIGLFQCLAVYPGFSRAGSTISGGLLAKVNYKTASEFSFLIALPVMVGATGLDLLKSWTYLSVDDIPMFAVGFITSFIVAMLAVVTFLKLLEKIGLKPFAYYRILLAILFTVFVLL</sequence>
<proteinExistence type="inferred from homology"/>
<comment type="function">
    <text evidence="1">Catalyzes the dephosphorylation of undecaprenyl diphosphate (UPP). Confers resistance to bacitracin.</text>
</comment>
<comment type="catalytic activity">
    <reaction evidence="1">
        <text>di-trans,octa-cis-undecaprenyl diphosphate + H2O = di-trans,octa-cis-undecaprenyl phosphate + phosphate + H(+)</text>
        <dbReference type="Rhea" id="RHEA:28094"/>
        <dbReference type="ChEBI" id="CHEBI:15377"/>
        <dbReference type="ChEBI" id="CHEBI:15378"/>
        <dbReference type="ChEBI" id="CHEBI:43474"/>
        <dbReference type="ChEBI" id="CHEBI:58405"/>
        <dbReference type="ChEBI" id="CHEBI:60392"/>
        <dbReference type="EC" id="3.6.1.27"/>
    </reaction>
</comment>
<comment type="subcellular location">
    <subcellularLocation>
        <location evidence="1">Cell membrane</location>
        <topology evidence="1">Multi-pass membrane protein</topology>
    </subcellularLocation>
</comment>
<comment type="miscellaneous">
    <text>Bacitracin is thought to be involved in the inhibition of peptidoglycan synthesis by sequestering undecaprenyl diphosphate, thereby reducing the pool of lipid carrier available.</text>
</comment>
<comment type="similarity">
    <text evidence="1">Belongs to the UppP family.</text>
</comment>
<dbReference type="EC" id="3.6.1.27" evidence="1"/>
<dbReference type="EMBL" id="AE017355">
    <property type="protein sequence ID" value="AAT58966.1"/>
    <property type="molecule type" value="Genomic_DNA"/>
</dbReference>
<dbReference type="RefSeq" id="YP_034603.1">
    <property type="nucleotide sequence ID" value="NC_005957.1"/>
</dbReference>
<dbReference type="SMR" id="Q6HPB7"/>
<dbReference type="KEGG" id="btk:BT9727_0251"/>
<dbReference type="PATRIC" id="fig|281309.8.peg.268"/>
<dbReference type="HOGENOM" id="CLU_060296_2_0_9"/>
<dbReference type="Proteomes" id="UP000001301">
    <property type="component" value="Chromosome"/>
</dbReference>
<dbReference type="GO" id="GO:0005886">
    <property type="term" value="C:plasma membrane"/>
    <property type="evidence" value="ECO:0007669"/>
    <property type="project" value="UniProtKB-SubCell"/>
</dbReference>
<dbReference type="GO" id="GO:0050380">
    <property type="term" value="F:undecaprenyl-diphosphatase activity"/>
    <property type="evidence" value="ECO:0007669"/>
    <property type="project" value="UniProtKB-UniRule"/>
</dbReference>
<dbReference type="GO" id="GO:0071555">
    <property type="term" value="P:cell wall organization"/>
    <property type="evidence" value="ECO:0007669"/>
    <property type="project" value="UniProtKB-KW"/>
</dbReference>
<dbReference type="GO" id="GO:0009252">
    <property type="term" value="P:peptidoglycan biosynthetic process"/>
    <property type="evidence" value="ECO:0007669"/>
    <property type="project" value="UniProtKB-KW"/>
</dbReference>
<dbReference type="GO" id="GO:0008360">
    <property type="term" value="P:regulation of cell shape"/>
    <property type="evidence" value="ECO:0007669"/>
    <property type="project" value="UniProtKB-KW"/>
</dbReference>
<dbReference type="GO" id="GO:0046677">
    <property type="term" value="P:response to antibiotic"/>
    <property type="evidence" value="ECO:0007669"/>
    <property type="project" value="UniProtKB-UniRule"/>
</dbReference>
<dbReference type="HAMAP" id="MF_01006">
    <property type="entry name" value="Undec_diphosphatase"/>
    <property type="match status" value="1"/>
</dbReference>
<dbReference type="InterPro" id="IPR003824">
    <property type="entry name" value="UppP"/>
</dbReference>
<dbReference type="NCBIfam" id="NF001388">
    <property type="entry name" value="PRK00281.1-1"/>
    <property type="match status" value="1"/>
</dbReference>
<dbReference type="NCBIfam" id="NF001389">
    <property type="entry name" value="PRK00281.1-2"/>
    <property type="match status" value="1"/>
</dbReference>
<dbReference type="NCBIfam" id="NF001390">
    <property type="entry name" value="PRK00281.1-4"/>
    <property type="match status" value="1"/>
</dbReference>
<dbReference type="NCBIfam" id="TIGR00753">
    <property type="entry name" value="undec_PP_bacA"/>
    <property type="match status" value="1"/>
</dbReference>
<dbReference type="PANTHER" id="PTHR30622">
    <property type="entry name" value="UNDECAPRENYL-DIPHOSPHATASE"/>
    <property type="match status" value="1"/>
</dbReference>
<dbReference type="PANTHER" id="PTHR30622:SF3">
    <property type="entry name" value="UNDECAPRENYL-DIPHOSPHATASE"/>
    <property type="match status" value="1"/>
</dbReference>
<dbReference type="Pfam" id="PF02673">
    <property type="entry name" value="BacA"/>
    <property type="match status" value="1"/>
</dbReference>
<name>UPPP1_BACHK</name>
<reference key="1">
    <citation type="journal article" date="2006" name="J. Bacteriol.">
        <title>Pathogenomic sequence analysis of Bacillus cereus and Bacillus thuringiensis isolates closely related to Bacillus anthracis.</title>
        <authorList>
            <person name="Han C.S."/>
            <person name="Xie G."/>
            <person name="Challacombe J.F."/>
            <person name="Altherr M.R."/>
            <person name="Bhotika S.S."/>
            <person name="Bruce D."/>
            <person name="Campbell C.S."/>
            <person name="Campbell M.L."/>
            <person name="Chen J."/>
            <person name="Chertkov O."/>
            <person name="Cleland C."/>
            <person name="Dimitrijevic M."/>
            <person name="Doggett N.A."/>
            <person name="Fawcett J.J."/>
            <person name="Glavina T."/>
            <person name="Goodwin L.A."/>
            <person name="Hill K.K."/>
            <person name="Hitchcock P."/>
            <person name="Jackson P.J."/>
            <person name="Keim P."/>
            <person name="Kewalramani A.R."/>
            <person name="Longmire J."/>
            <person name="Lucas S."/>
            <person name="Malfatti S."/>
            <person name="McMurry K."/>
            <person name="Meincke L.J."/>
            <person name="Misra M."/>
            <person name="Moseman B.L."/>
            <person name="Mundt M."/>
            <person name="Munk A.C."/>
            <person name="Okinaka R.T."/>
            <person name="Parson-Quintana B."/>
            <person name="Reilly L.P."/>
            <person name="Richardson P."/>
            <person name="Robinson D.L."/>
            <person name="Rubin E."/>
            <person name="Saunders E."/>
            <person name="Tapia R."/>
            <person name="Tesmer J.G."/>
            <person name="Thayer N."/>
            <person name="Thompson L.S."/>
            <person name="Tice H."/>
            <person name="Ticknor L.O."/>
            <person name="Wills P.L."/>
            <person name="Brettin T.S."/>
            <person name="Gilna P."/>
        </authorList>
    </citation>
    <scope>NUCLEOTIDE SEQUENCE [LARGE SCALE GENOMIC DNA]</scope>
    <source>
        <strain>97-27</strain>
    </source>
</reference>
<accession>Q6HPB7</accession>
<organism>
    <name type="scientific">Bacillus thuringiensis subsp. konkukian (strain 97-27)</name>
    <dbReference type="NCBI Taxonomy" id="281309"/>
    <lineage>
        <taxon>Bacteria</taxon>
        <taxon>Bacillati</taxon>
        <taxon>Bacillota</taxon>
        <taxon>Bacilli</taxon>
        <taxon>Bacillales</taxon>
        <taxon>Bacillaceae</taxon>
        <taxon>Bacillus</taxon>
        <taxon>Bacillus cereus group</taxon>
    </lineage>
</organism>
<evidence type="ECO:0000255" key="1">
    <source>
        <dbReference type="HAMAP-Rule" id="MF_01006"/>
    </source>
</evidence>
<protein>
    <recommendedName>
        <fullName evidence="1">Undecaprenyl-diphosphatase 1</fullName>
        <ecNumber evidence="1">3.6.1.27</ecNumber>
    </recommendedName>
    <alternativeName>
        <fullName evidence="1">Bacitracin resistance protein 1</fullName>
    </alternativeName>
    <alternativeName>
        <fullName evidence="1">Undecaprenyl pyrophosphate phosphatase 1</fullName>
    </alternativeName>
</protein>